<gene>
    <name evidence="1" type="primary">cysS</name>
    <name type="ordered locus">EcE24377A_0566</name>
</gene>
<name>SYC_ECO24</name>
<accession>A7ZIT5</accession>
<organism>
    <name type="scientific">Escherichia coli O139:H28 (strain E24377A / ETEC)</name>
    <dbReference type="NCBI Taxonomy" id="331111"/>
    <lineage>
        <taxon>Bacteria</taxon>
        <taxon>Pseudomonadati</taxon>
        <taxon>Pseudomonadota</taxon>
        <taxon>Gammaproteobacteria</taxon>
        <taxon>Enterobacterales</taxon>
        <taxon>Enterobacteriaceae</taxon>
        <taxon>Escherichia</taxon>
    </lineage>
</organism>
<sequence>MLKIFNTLTRQKEEFKPIHAGEVGMYVCGITVYDLCHIGHGRTFVAFDVVARYLRFLGYKLKYVRNITDIDDKIIKRANENGESFVALVDRMIAEMHKDFDALNILRPDMEPRATHHIAEIIELTEQLIAKGHAYVADNGDVMFDVPTDPTYGVLSRQDLDQLQAGARVDVVDDKRNPMDFVLWKMSKEGEPSWPSPWGAGRPGWHIECSAMNCKQLGNHFDIHGGGSDLMFPHHENEIAQSTCAHDGQYVNYWMHSGMVMVDREKMSKSLGNFFTVRDVLKYYDAETVRYFLMSGHYRSQLNYSEENLKQARAALERLYTALRGTDKTVAPAGGEAFEARFIEAMDDDFNTPEAYSVLFDMAREVNRLKAEDMAAANAMASHLRKLSAVLGLLEQEPEAFLQSGAQADDSEVAEIEALIQQRLDARKAKDWAAADAARDRLNEMGIVLEDGPQGTTWRRK</sequence>
<keyword id="KW-0030">Aminoacyl-tRNA synthetase</keyword>
<keyword id="KW-0067">ATP-binding</keyword>
<keyword id="KW-0963">Cytoplasm</keyword>
<keyword id="KW-0436">Ligase</keyword>
<keyword id="KW-0479">Metal-binding</keyword>
<keyword id="KW-0547">Nucleotide-binding</keyword>
<keyword id="KW-0648">Protein biosynthesis</keyword>
<keyword id="KW-1185">Reference proteome</keyword>
<keyword id="KW-0862">Zinc</keyword>
<protein>
    <recommendedName>
        <fullName evidence="1">Cysteine--tRNA ligase</fullName>
        <ecNumber evidence="1">6.1.1.16</ecNumber>
    </recommendedName>
    <alternativeName>
        <fullName evidence="1">Cysteinyl-tRNA synthetase</fullName>
        <shortName evidence="1">CysRS</shortName>
    </alternativeName>
</protein>
<dbReference type="EC" id="6.1.1.16" evidence="1"/>
<dbReference type="EMBL" id="CP000800">
    <property type="protein sequence ID" value="ABV17492.1"/>
    <property type="molecule type" value="Genomic_DNA"/>
</dbReference>
<dbReference type="RefSeq" id="WP_000912345.1">
    <property type="nucleotide sequence ID" value="NC_009801.1"/>
</dbReference>
<dbReference type="SMR" id="A7ZIT5"/>
<dbReference type="GeneID" id="75204392"/>
<dbReference type="KEGG" id="ecw:EcE24377A_0566"/>
<dbReference type="HOGENOM" id="CLU_013528_0_1_6"/>
<dbReference type="Proteomes" id="UP000001122">
    <property type="component" value="Chromosome"/>
</dbReference>
<dbReference type="GO" id="GO:0005829">
    <property type="term" value="C:cytosol"/>
    <property type="evidence" value="ECO:0007669"/>
    <property type="project" value="TreeGrafter"/>
</dbReference>
<dbReference type="GO" id="GO:0005524">
    <property type="term" value="F:ATP binding"/>
    <property type="evidence" value="ECO:0007669"/>
    <property type="project" value="UniProtKB-UniRule"/>
</dbReference>
<dbReference type="GO" id="GO:0004817">
    <property type="term" value="F:cysteine-tRNA ligase activity"/>
    <property type="evidence" value="ECO:0007669"/>
    <property type="project" value="UniProtKB-UniRule"/>
</dbReference>
<dbReference type="GO" id="GO:0008270">
    <property type="term" value="F:zinc ion binding"/>
    <property type="evidence" value="ECO:0007669"/>
    <property type="project" value="UniProtKB-UniRule"/>
</dbReference>
<dbReference type="GO" id="GO:0006423">
    <property type="term" value="P:cysteinyl-tRNA aminoacylation"/>
    <property type="evidence" value="ECO:0007669"/>
    <property type="project" value="UniProtKB-UniRule"/>
</dbReference>
<dbReference type="CDD" id="cd07963">
    <property type="entry name" value="Anticodon_Ia_Cys"/>
    <property type="match status" value="1"/>
</dbReference>
<dbReference type="CDD" id="cd00672">
    <property type="entry name" value="CysRS_core"/>
    <property type="match status" value="1"/>
</dbReference>
<dbReference type="FunFam" id="1.20.120.1910:FF:000001">
    <property type="entry name" value="Cysteine--tRNA ligase"/>
    <property type="match status" value="1"/>
</dbReference>
<dbReference type="FunFam" id="3.40.50.620:FF:000009">
    <property type="entry name" value="Cysteine--tRNA ligase"/>
    <property type="match status" value="1"/>
</dbReference>
<dbReference type="Gene3D" id="1.20.120.1910">
    <property type="entry name" value="Cysteine-tRNA ligase, C-terminal anti-codon recognition domain"/>
    <property type="match status" value="1"/>
</dbReference>
<dbReference type="Gene3D" id="3.40.50.620">
    <property type="entry name" value="HUPs"/>
    <property type="match status" value="1"/>
</dbReference>
<dbReference type="HAMAP" id="MF_00041">
    <property type="entry name" value="Cys_tRNA_synth"/>
    <property type="match status" value="1"/>
</dbReference>
<dbReference type="InterPro" id="IPR015803">
    <property type="entry name" value="Cys-tRNA-ligase"/>
</dbReference>
<dbReference type="InterPro" id="IPR015273">
    <property type="entry name" value="Cys-tRNA-synt_Ia_DALR"/>
</dbReference>
<dbReference type="InterPro" id="IPR024909">
    <property type="entry name" value="Cys-tRNA/MSH_ligase"/>
</dbReference>
<dbReference type="InterPro" id="IPR056411">
    <property type="entry name" value="CysS_C"/>
</dbReference>
<dbReference type="InterPro" id="IPR014729">
    <property type="entry name" value="Rossmann-like_a/b/a_fold"/>
</dbReference>
<dbReference type="InterPro" id="IPR032678">
    <property type="entry name" value="tRNA-synt_1_cat_dom"/>
</dbReference>
<dbReference type="InterPro" id="IPR009080">
    <property type="entry name" value="tRNAsynth_Ia_anticodon-bd"/>
</dbReference>
<dbReference type="NCBIfam" id="TIGR00435">
    <property type="entry name" value="cysS"/>
    <property type="match status" value="1"/>
</dbReference>
<dbReference type="PANTHER" id="PTHR10890:SF3">
    <property type="entry name" value="CYSTEINE--TRNA LIGASE, CYTOPLASMIC"/>
    <property type="match status" value="1"/>
</dbReference>
<dbReference type="PANTHER" id="PTHR10890">
    <property type="entry name" value="CYSTEINYL-TRNA SYNTHETASE"/>
    <property type="match status" value="1"/>
</dbReference>
<dbReference type="Pfam" id="PF23493">
    <property type="entry name" value="CysS_C"/>
    <property type="match status" value="1"/>
</dbReference>
<dbReference type="Pfam" id="PF09190">
    <property type="entry name" value="DALR_2"/>
    <property type="match status" value="1"/>
</dbReference>
<dbReference type="Pfam" id="PF01406">
    <property type="entry name" value="tRNA-synt_1e"/>
    <property type="match status" value="1"/>
</dbReference>
<dbReference type="PRINTS" id="PR00983">
    <property type="entry name" value="TRNASYNTHCYS"/>
</dbReference>
<dbReference type="SMART" id="SM00840">
    <property type="entry name" value="DALR_2"/>
    <property type="match status" value="1"/>
</dbReference>
<dbReference type="SUPFAM" id="SSF47323">
    <property type="entry name" value="Anticodon-binding domain of a subclass of class I aminoacyl-tRNA synthetases"/>
    <property type="match status" value="1"/>
</dbReference>
<dbReference type="SUPFAM" id="SSF52374">
    <property type="entry name" value="Nucleotidylyl transferase"/>
    <property type="match status" value="1"/>
</dbReference>
<proteinExistence type="inferred from homology"/>
<comment type="catalytic activity">
    <reaction evidence="1">
        <text>tRNA(Cys) + L-cysteine + ATP = L-cysteinyl-tRNA(Cys) + AMP + diphosphate</text>
        <dbReference type="Rhea" id="RHEA:17773"/>
        <dbReference type="Rhea" id="RHEA-COMP:9661"/>
        <dbReference type="Rhea" id="RHEA-COMP:9679"/>
        <dbReference type="ChEBI" id="CHEBI:30616"/>
        <dbReference type="ChEBI" id="CHEBI:33019"/>
        <dbReference type="ChEBI" id="CHEBI:35235"/>
        <dbReference type="ChEBI" id="CHEBI:78442"/>
        <dbReference type="ChEBI" id="CHEBI:78517"/>
        <dbReference type="ChEBI" id="CHEBI:456215"/>
        <dbReference type="EC" id="6.1.1.16"/>
    </reaction>
</comment>
<comment type="cofactor">
    <cofactor evidence="1">
        <name>Zn(2+)</name>
        <dbReference type="ChEBI" id="CHEBI:29105"/>
    </cofactor>
    <text evidence="1">Binds 1 zinc ion per subunit.</text>
</comment>
<comment type="subunit">
    <text evidence="1">Monomer.</text>
</comment>
<comment type="subcellular location">
    <subcellularLocation>
        <location evidence="1">Cytoplasm</location>
    </subcellularLocation>
</comment>
<comment type="similarity">
    <text evidence="1">Belongs to the class-I aminoacyl-tRNA synthetase family.</text>
</comment>
<evidence type="ECO:0000255" key="1">
    <source>
        <dbReference type="HAMAP-Rule" id="MF_00041"/>
    </source>
</evidence>
<reference key="1">
    <citation type="journal article" date="2008" name="J. Bacteriol.">
        <title>The pangenome structure of Escherichia coli: comparative genomic analysis of E. coli commensal and pathogenic isolates.</title>
        <authorList>
            <person name="Rasko D.A."/>
            <person name="Rosovitz M.J."/>
            <person name="Myers G.S.A."/>
            <person name="Mongodin E.F."/>
            <person name="Fricke W.F."/>
            <person name="Gajer P."/>
            <person name="Crabtree J."/>
            <person name="Sebaihia M."/>
            <person name="Thomson N.R."/>
            <person name="Chaudhuri R."/>
            <person name="Henderson I.R."/>
            <person name="Sperandio V."/>
            <person name="Ravel J."/>
        </authorList>
    </citation>
    <scope>NUCLEOTIDE SEQUENCE [LARGE SCALE GENOMIC DNA]</scope>
    <source>
        <strain>E24377A / ETEC</strain>
    </source>
</reference>
<feature type="chain" id="PRO_0000332820" description="Cysteine--tRNA ligase">
    <location>
        <begin position="1"/>
        <end position="461"/>
    </location>
</feature>
<feature type="short sequence motif" description="'HIGH' region">
    <location>
        <begin position="30"/>
        <end position="40"/>
    </location>
</feature>
<feature type="short sequence motif" description="'KMSKS' region">
    <location>
        <begin position="266"/>
        <end position="270"/>
    </location>
</feature>
<feature type="binding site" evidence="1">
    <location>
        <position position="28"/>
    </location>
    <ligand>
        <name>Zn(2+)</name>
        <dbReference type="ChEBI" id="CHEBI:29105"/>
    </ligand>
</feature>
<feature type="binding site" evidence="1">
    <location>
        <position position="209"/>
    </location>
    <ligand>
        <name>Zn(2+)</name>
        <dbReference type="ChEBI" id="CHEBI:29105"/>
    </ligand>
</feature>
<feature type="binding site" evidence="1">
    <location>
        <position position="234"/>
    </location>
    <ligand>
        <name>Zn(2+)</name>
        <dbReference type="ChEBI" id="CHEBI:29105"/>
    </ligand>
</feature>
<feature type="binding site" evidence="1">
    <location>
        <position position="238"/>
    </location>
    <ligand>
        <name>Zn(2+)</name>
        <dbReference type="ChEBI" id="CHEBI:29105"/>
    </ligand>
</feature>
<feature type="binding site" evidence="1">
    <location>
        <position position="269"/>
    </location>
    <ligand>
        <name>ATP</name>
        <dbReference type="ChEBI" id="CHEBI:30616"/>
    </ligand>
</feature>